<feature type="chain" id="PRO_0000357173" description="Methylthioribose-1-phosphate isomerase">
    <location>
        <begin position="1"/>
        <end position="332"/>
    </location>
</feature>
<feature type="active site" description="Proton donor" evidence="1">
    <location>
        <position position="233"/>
    </location>
</feature>
<feature type="binding site" evidence="1">
    <location>
        <begin position="44"/>
        <end position="46"/>
    </location>
    <ligand>
        <name>substrate</name>
    </ligand>
</feature>
<feature type="binding site" evidence="1">
    <location>
        <position position="87"/>
    </location>
    <ligand>
        <name>substrate</name>
    </ligand>
</feature>
<feature type="binding site" evidence="1">
    <location>
        <position position="192"/>
    </location>
    <ligand>
        <name>substrate</name>
    </ligand>
</feature>
<feature type="binding site" evidence="1">
    <location>
        <begin position="243"/>
        <end position="244"/>
    </location>
    <ligand>
        <name>substrate</name>
    </ligand>
</feature>
<feature type="site" description="Transition state stabilizer" evidence="1">
    <location>
        <position position="153"/>
    </location>
</feature>
<name>MTNA_DEHMC</name>
<organism>
    <name type="scientific">Dehalococcoides mccartyi (strain CBDB1)</name>
    <dbReference type="NCBI Taxonomy" id="255470"/>
    <lineage>
        <taxon>Bacteria</taxon>
        <taxon>Bacillati</taxon>
        <taxon>Chloroflexota</taxon>
        <taxon>Dehalococcoidia</taxon>
        <taxon>Dehalococcoidales</taxon>
        <taxon>Dehalococcoidaceae</taxon>
        <taxon>Dehalococcoides</taxon>
    </lineage>
</organism>
<sequence length="332" mass="35917">MKAIEWRNNRLIILDQTLLPLEEKYLELNDYHAVAEAIKTLRIRGAPSIGVAAAYGIALGALSIETRYCSEFLPLYQQISAEIASTRPTAKNLFMAVERMDHVVASGTDVLQVKISLVDEALKIHREEEEASRKISTFGADLIQPGWTVLTHCNAGPLATAGYGTALGVIIAAHQQNKGISAFATETRPLLQGARLTALELKEAGVPFKLITDSMAGHFMKKGVINAVVVGADRIARNGDTANKIGTYSLAVLALAHGIPFYVAAPSSTFDKSIESGNDIVIEERKPEEITYLRGQRIAPENIDVANPAFDVTPANLIAAFITENGIIRRGE</sequence>
<accession>Q3ZZT1</accession>
<keyword id="KW-0028">Amino-acid biosynthesis</keyword>
<keyword id="KW-0413">Isomerase</keyword>
<keyword id="KW-0486">Methionine biosynthesis</keyword>
<evidence type="ECO:0000255" key="1">
    <source>
        <dbReference type="HAMAP-Rule" id="MF_01678"/>
    </source>
</evidence>
<evidence type="ECO:0000305" key="2"/>
<comment type="function">
    <text evidence="1">Catalyzes the interconversion of methylthioribose-1-phosphate (MTR-1-P) into methylthioribulose-1-phosphate (MTRu-1-P).</text>
</comment>
<comment type="catalytic activity">
    <reaction evidence="1">
        <text>5-(methylsulfanyl)-alpha-D-ribose 1-phosphate = 5-(methylsulfanyl)-D-ribulose 1-phosphate</text>
        <dbReference type="Rhea" id="RHEA:19989"/>
        <dbReference type="ChEBI" id="CHEBI:58533"/>
        <dbReference type="ChEBI" id="CHEBI:58548"/>
        <dbReference type="EC" id="5.3.1.23"/>
    </reaction>
</comment>
<comment type="pathway">
    <text evidence="1">Amino-acid biosynthesis; L-methionine biosynthesis via salvage pathway; L-methionine from S-methyl-5-thio-alpha-D-ribose 1-phosphate: step 1/6.</text>
</comment>
<comment type="similarity">
    <text evidence="2">Belongs to the eIF-2B alpha/beta/delta subunits family. MtnA subfamily.</text>
</comment>
<proteinExistence type="inferred from homology"/>
<reference key="1">
    <citation type="journal article" date="2005" name="Nat. Biotechnol.">
        <title>Genome sequence of the chlorinated compound-respiring bacterium Dehalococcoides species strain CBDB1.</title>
        <authorList>
            <person name="Kube M."/>
            <person name="Beck A."/>
            <person name="Zinder S.H."/>
            <person name="Kuhl H."/>
            <person name="Reinhardt R."/>
            <person name="Adrian L."/>
        </authorList>
    </citation>
    <scope>NUCLEOTIDE SEQUENCE [LARGE SCALE GENOMIC DNA]</scope>
    <source>
        <strain>CBDB1</strain>
    </source>
</reference>
<gene>
    <name evidence="1" type="primary">mtnA</name>
    <name type="ordered locus">cbdbA484</name>
</gene>
<dbReference type="EC" id="5.3.1.23" evidence="1"/>
<dbReference type="EMBL" id="AJ965256">
    <property type="protein sequence ID" value="CAI82682.1"/>
    <property type="molecule type" value="Genomic_DNA"/>
</dbReference>
<dbReference type="RefSeq" id="WP_011309035.1">
    <property type="nucleotide sequence ID" value="NC_007356.1"/>
</dbReference>
<dbReference type="SMR" id="Q3ZZT1"/>
<dbReference type="KEGG" id="deh:cbdbA484"/>
<dbReference type="HOGENOM" id="CLU_016218_1_2_0"/>
<dbReference type="UniPathway" id="UPA00904">
    <property type="reaction ID" value="UER00874"/>
</dbReference>
<dbReference type="Proteomes" id="UP000000433">
    <property type="component" value="Chromosome"/>
</dbReference>
<dbReference type="GO" id="GO:0046523">
    <property type="term" value="F:S-methyl-5-thioribose-1-phosphate isomerase activity"/>
    <property type="evidence" value="ECO:0007669"/>
    <property type="project" value="UniProtKB-UniRule"/>
</dbReference>
<dbReference type="GO" id="GO:0019509">
    <property type="term" value="P:L-methionine salvage from methylthioadenosine"/>
    <property type="evidence" value="ECO:0007669"/>
    <property type="project" value="UniProtKB-UniRule"/>
</dbReference>
<dbReference type="FunFam" id="1.20.120.420:FF:000003">
    <property type="entry name" value="Methylthioribose-1-phosphate isomerase"/>
    <property type="match status" value="1"/>
</dbReference>
<dbReference type="FunFam" id="3.40.50.10470:FF:000006">
    <property type="entry name" value="Methylthioribose-1-phosphate isomerase"/>
    <property type="match status" value="1"/>
</dbReference>
<dbReference type="Gene3D" id="1.20.120.420">
    <property type="entry name" value="translation initiation factor eif-2b, domain 1"/>
    <property type="match status" value="1"/>
</dbReference>
<dbReference type="Gene3D" id="3.40.50.10470">
    <property type="entry name" value="Translation initiation factor eif-2b, domain 2"/>
    <property type="match status" value="1"/>
</dbReference>
<dbReference type="HAMAP" id="MF_01678">
    <property type="entry name" value="Salvage_MtnA"/>
    <property type="match status" value="1"/>
</dbReference>
<dbReference type="InterPro" id="IPR000649">
    <property type="entry name" value="IF-2B-related"/>
</dbReference>
<dbReference type="InterPro" id="IPR005251">
    <property type="entry name" value="IF-M1Pi"/>
</dbReference>
<dbReference type="InterPro" id="IPR042529">
    <property type="entry name" value="IF_2B-like_C"/>
</dbReference>
<dbReference type="InterPro" id="IPR011559">
    <property type="entry name" value="Initiation_fac_2B_a/b/d"/>
</dbReference>
<dbReference type="InterPro" id="IPR027363">
    <property type="entry name" value="M1Pi_N"/>
</dbReference>
<dbReference type="InterPro" id="IPR037171">
    <property type="entry name" value="NagB/RpiA_transferase-like"/>
</dbReference>
<dbReference type="NCBIfam" id="TIGR00524">
    <property type="entry name" value="eIF-2B_rel"/>
    <property type="match status" value="1"/>
</dbReference>
<dbReference type="NCBIfam" id="NF004326">
    <property type="entry name" value="PRK05720.1"/>
    <property type="match status" value="1"/>
</dbReference>
<dbReference type="NCBIfam" id="TIGR00512">
    <property type="entry name" value="salvage_mtnA"/>
    <property type="match status" value="1"/>
</dbReference>
<dbReference type="PANTHER" id="PTHR43475">
    <property type="entry name" value="METHYLTHIORIBOSE-1-PHOSPHATE ISOMERASE"/>
    <property type="match status" value="1"/>
</dbReference>
<dbReference type="PANTHER" id="PTHR43475:SF1">
    <property type="entry name" value="METHYLTHIORIBOSE-1-PHOSPHATE ISOMERASE"/>
    <property type="match status" value="1"/>
</dbReference>
<dbReference type="Pfam" id="PF01008">
    <property type="entry name" value="IF-2B"/>
    <property type="match status" value="1"/>
</dbReference>
<dbReference type="SUPFAM" id="SSF100950">
    <property type="entry name" value="NagB/RpiA/CoA transferase-like"/>
    <property type="match status" value="1"/>
</dbReference>
<protein>
    <recommendedName>
        <fullName evidence="1">Methylthioribose-1-phosphate isomerase</fullName>
        <shortName evidence="1">M1Pi</shortName>
        <shortName evidence="1">MTR-1-P isomerase</shortName>
        <ecNumber evidence="1">5.3.1.23</ecNumber>
    </recommendedName>
    <alternativeName>
        <fullName evidence="1">S-methyl-5-thioribose-1-phosphate isomerase</fullName>
    </alternativeName>
</protein>